<gene>
    <name type="primary">ATG21</name>
    <name type="ORF">SCY_5627</name>
</gene>
<proteinExistence type="inferred from homology"/>
<accession>A6ZWF0</accession>
<reference key="1">
    <citation type="journal article" date="2007" name="Proc. Natl. Acad. Sci. U.S.A.">
        <title>Genome sequencing and comparative analysis of Saccharomyces cerevisiae strain YJM789.</title>
        <authorList>
            <person name="Wei W."/>
            <person name="McCusker J.H."/>
            <person name="Hyman R.W."/>
            <person name="Jones T."/>
            <person name="Ning Y."/>
            <person name="Cao Z."/>
            <person name="Gu Z."/>
            <person name="Bruno D."/>
            <person name="Miranda M."/>
            <person name="Nguyen M."/>
            <person name="Wilhelmy J."/>
            <person name="Komp C."/>
            <person name="Tamse R."/>
            <person name="Wang X."/>
            <person name="Jia P."/>
            <person name="Luedi P."/>
            <person name="Oefner P.J."/>
            <person name="David L."/>
            <person name="Dietrich F.S."/>
            <person name="Li Y."/>
            <person name="Davis R.W."/>
            <person name="Steinmetz L.M."/>
        </authorList>
    </citation>
    <scope>NUCLEOTIDE SEQUENCE [LARGE SCALE GENOMIC DNA]</scope>
    <source>
        <strain>YJM789</strain>
    </source>
</reference>
<feature type="chain" id="PRO_0000318013" description="Autophagy-related protein 21">
    <location>
        <begin position="1"/>
        <end position="496"/>
    </location>
</feature>
<feature type="repeat" description="WD 1">
    <location>
        <begin position="1"/>
        <end position="35"/>
    </location>
</feature>
<feature type="repeat" description="WD 2">
    <location>
        <begin position="148"/>
        <end position="190"/>
    </location>
</feature>
<feature type="repeat" description="WD 3">
    <location>
        <begin position="294"/>
        <end position="334"/>
    </location>
</feature>
<feature type="repeat" description="WD 4">
    <location>
        <begin position="346"/>
        <end position="385"/>
    </location>
</feature>
<feature type="repeat" description="WD 5">
    <location>
        <begin position="448"/>
        <end position="488"/>
    </location>
</feature>
<feature type="region of interest" description="Disordered" evidence="3">
    <location>
        <begin position="41"/>
        <end position="86"/>
    </location>
</feature>
<feature type="short sequence motif" description="L/FRRG motif" evidence="2">
    <location>
        <begin position="342"/>
        <end position="346"/>
    </location>
</feature>
<feature type="compositionally biased region" description="Low complexity" evidence="3">
    <location>
        <begin position="46"/>
        <end position="57"/>
    </location>
</feature>
<feature type="compositionally biased region" description="Acidic residues" evidence="3">
    <location>
        <begin position="75"/>
        <end position="84"/>
    </location>
</feature>
<feature type="modified residue" description="Phosphothreonine" evidence="2">
    <location>
        <position position="213"/>
    </location>
</feature>
<feature type="modified residue" description="Phosphoserine" evidence="2">
    <location>
        <position position="237"/>
    </location>
</feature>
<protein>
    <recommendedName>
        <fullName>Autophagy-related protein 21</fullName>
    </recommendedName>
</protein>
<dbReference type="EMBL" id="AAFW02000135">
    <property type="protein sequence ID" value="EDN61042.1"/>
    <property type="molecule type" value="Genomic_DNA"/>
</dbReference>
<dbReference type="SMR" id="A6ZWF0"/>
<dbReference type="HOGENOM" id="CLU_025895_5_2_1"/>
<dbReference type="Proteomes" id="UP000007060">
    <property type="component" value="Unassembled WGS sequence"/>
</dbReference>
<dbReference type="GO" id="GO:0005774">
    <property type="term" value="C:vacuolar membrane"/>
    <property type="evidence" value="ECO:0007669"/>
    <property type="project" value="UniProtKB-SubCell"/>
</dbReference>
<dbReference type="GO" id="GO:0006914">
    <property type="term" value="P:autophagy"/>
    <property type="evidence" value="ECO:0007669"/>
    <property type="project" value="UniProtKB-KW"/>
</dbReference>
<dbReference type="GO" id="GO:0015031">
    <property type="term" value="P:protein transport"/>
    <property type="evidence" value="ECO:0007669"/>
    <property type="project" value="UniProtKB-KW"/>
</dbReference>
<dbReference type="Gene3D" id="2.130.10.10">
    <property type="entry name" value="YVTN repeat-like/Quinoprotein amine dehydrogenase"/>
    <property type="match status" value="1"/>
</dbReference>
<dbReference type="InterPro" id="IPR048720">
    <property type="entry name" value="PROPPIN"/>
</dbReference>
<dbReference type="InterPro" id="IPR015943">
    <property type="entry name" value="WD40/YVTN_repeat-like_dom_sf"/>
</dbReference>
<dbReference type="InterPro" id="IPR036322">
    <property type="entry name" value="WD40_repeat_dom_sf"/>
</dbReference>
<dbReference type="InterPro" id="IPR001680">
    <property type="entry name" value="WD40_rpt"/>
</dbReference>
<dbReference type="PANTHER" id="PTHR11227">
    <property type="entry name" value="WD-REPEAT PROTEIN INTERACTING WITH PHOSPHOINOSIDES WIPI -RELATED"/>
    <property type="match status" value="1"/>
</dbReference>
<dbReference type="Pfam" id="PF21032">
    <property type="entry name" value="PROPPIN"/>
    <property type="match status" value="1"/>
</dbReference>
<dbReference type="SMART" id="SM00320">
    <property type="entry name" value="WD40"/>
    <property type="match status" value="3"/>
</dbReference>
<dbReference type="SUPFAM" id="SSF50978">
    <property type="entry name" value="WD40 repeat-like"/>
    <property type="match status" value="1"/>
</dbReference>
<comment type="function">
    <text evidence="1">Required for cytoplasm to vacuole transport (Cvt) vesicles formation and mitophagy. Involved in binding of phosphatidylethanolamine to ATG8 and in recruitment of ATG8 and ATG5 to the pre-autophagosomal structure. Protects ATG8 from ARG4-mediated cleavage. Essential for maturation of proaminopeptidase I (By similarity).</text>
</comment>
<comment type="subcellular location">
    <subcellularLocation>
        <location evidence="1">Cytoplasm</location>
    </subcellularLocation>
    <subcellularLocation>
        <location evidence="1">Vacuole membrane</location>
    </subcellularLocation>
    <text evidence="1">And perivacuolar punctate structures.</text>
</comment>
<comment type="domain">
    <text>Contains a beta-propeller domain involved in specific binding to phosphatidylinositol 3,5-bisphosphate (PIP2).</text>
</comment>
<comment type="domain">
    <text evidence="2">The L/FRRG motif is essential for the cytoplasm to vacuole transport (Cvt) pathway and for the recruitment of ATG8 and ATG16 to the PAS in nutrient-rich medium and in both its recruitment to and dissociation from the PAS under starvation conditions.</text>
</comment>
<comment type="similarity">
    <text evidence="4">Belongs to the WD repeat PROPPIN family.</text>
</comment>
<keyword id="KW-0072">Autophagy</keyword>
<keyword id="KW-0963">Cytoplasm</keyword>
<keyword id="KW-0472">Membrane</keyword>
<keyword id="KW-0597">Phosphoprotein</keyword>
<keyword id="KW-0653">Protein transport</keyword>
<keyword id="KW-0677">Repeat</keyword>
<keyword id="KW-0813">Transport</keyword>
<keyword id="KW-0926">Vacuole</keyword>
<keyword id="KW-0853">WD repeat</keyword>
<sequence>MKVLQFNQDATCCVVAASSHQISIFNCDPFGKCFEIDTKNSKKKTSNNNGTASNSESRNNEESILITNGSRDRTDAEEEEDNEDNALVTGNILKEGEFVIEMLFSTSLIAIADRGQGLNKGKKLKIVNTKRKSTICEIVFPHEIVDVVMNRKRMCVLLESDQIFIYDISCMKPLETIDLWEDHYKRSQANSFSNASNTGTLEGDSANLNRVATNLLANATQKSVNGSNPSVRTRRNSLRSKIRPRMVLSNDDRSILCFTAYSSPKKNKPNSEALYDVVIYDTLNVTPVNYLNSVHKGNVACLAVSHDGKLLATASDKGTIIRVFHTGVDSDYMSSRSLFKEFRRGTRLCNLYQLAFDKSMTMIGCVGDTDTIHLFKLDDASNSLPGDNSSNGHWNEEEDILASNSNPSMGTPKEIPLSKPRIANYFSKKIKSSIPNQNLSRNFAYITVNESNRSCLGFPDEFPNQVYIASDDGTFSIYSIPSKPGECVLTKNNKFT</sequence>
<evidence type="ECO:0000250" key="1"/>
<evidence type="ECO:0000250" key="2">
    <source>
        <dbReference type="UniProtKB" id="Q02887"/>
    </source>
</evidence>
<evidence type="ECO:0000256" key="3">
    <source>
        <dbReference type="SAM" id="MobiDB-lite"/>
    </source>
</evidence>
<evidence type="ECO:0000305" key="4"/>
<name>ATG21_YEAS7</name>
<organism>
    <name type="scientific">Saccharomyces cerevisiae (strain YJM789)</name>
    <name type="common">Baker's yeast</name>
    <dbReference type="NCBI Taxonomy" id="307796"/>
    <lineage>
        <taxon>Eukaryota</taxon>
        <taxon>Fungi</taxon>
        <taxon>Dikarya</taxon>
        <taxon>Ascomycota</taxon>
        <taxon>Saccharomycotina</taxon>
        <taxon>Saccharomycetes</taxon>
        <taxon>Saccharomycetales</taxon>
        <taxon>Saccharomycetaceae</taxon>
        <taxon>Saccharomyces</taxon>
    </lineage>
</organism>